<gene>
    <name evidence="1" type="primary">ubiE</name>
    <name type="ordered locus">BMA10247_2398</name>
</gene>
<reference key="1">
    <citation type="journal article" date="2010" name="Genome Biol. Evol.">
        <title>Continuing evolution of Burkholderia mallei through genome reduction and large-scale rearrangements.</title>
        <authorList>
            <person name="Losada L."/>
            <person name="Ronning C.M."/>
            <person name="DeShazer D."/>
            <person name="Woods D."/>
            <person name="Fedorova N."/>
            <person name="Kim H.S."/>
            <person name="Shabalina S.A."/>
            <person name="Pearson T.R."/>
            <person name="Brinkac L."/>
            <person name="Tan P."/>
            <person name="Nandi T."/>
            <person name="Crabtree J."/>
            <person name="Badger J."/>
            <person name="Beckstrom-Sternberg S."/>
            <person name="Saqib M."/>
            <person name="Schutzer S.E."/>
            <person name="Keim P."/>
            <person name="Nierman W.C."/>
        </authorList>
    </citation>
    <scope>NUCLEOTIDE SEQUENCE [LARGE SCALE GENOMIC DNA]</scope>
    <source>
        <strain>NCTC 10247</strain>
    </source>
</reference>
<keyword id="KW-0474">Menaquinone biosynthesis</keyword>
<keyword id="KW-0489">Methyltransferase</keyword>
<keyword id="KW-0949">S-adenosyl-L-methionine</keyword>
<keyword id="KW-0808">Transferase</keyword>
<keyword id="KW-0831">Ubiquinone biosynthesis</keyword>
<protein>
    <recommendedName>
        <fullName evidence="1">Ubiquinone/menaquinone biosynthesis C-methyltransferase UbiE</fullName>
        <ecNumber evidence="1">2.1.1.163</ecNumber>
        <ecNumber evidence="1">2.1.1.201</ecNumber>
    </recommendedName>
    <alternativeName>
        <fullName evidence="1">2-methoxy-6-polyprenyl-1,4-benzoquinol methylase</fullName>
    </alternativeName>
    <alternativeName>
        <fullName evidence="1">Demethylmenaquinone methyltransferase</fullName>
    </alternativeName>
</protein>
<evidence type="ECO:0000255" key="1">
    <source>
        <dbReference type="HAMAP-Rule" id="MF_01813"/>
    </source>
</evidence>
<dbReference type="EC" id="2.1.1.163" evidence="1"/>
<dbReference type="EC" id="2.1.1.201" evidence="1"/>
<dbReference type="EMBL" id="CP000548">
    <property type="protein sequence ID" value="ABO05744.1"/>
    <property type="molecule type" value="Genomic_DNA"/>
</dbReference>
<dbReference type="RefSeq" id="WP_004189973.1">
    <property type="nucleotide sequence ID" value="NZ_CP007802.1"/>
</dbReference>
<dbReference type="SMR" id="A3MNT8"/>
<dbReference type="GeneID" id="93059149"/>
<dbReference type="KEGG" id="bmaz:BM44_892"/>
<dbReference type="KEGG" id="bmn:BMA10247_2398"/>
<dbReference type="PATRIC" id="fig|320389.8.peg.992"/>
<dbReference type="UniPathway" id="UPA00079">
    <property type="reaction ID" value="UER00169"/>
</dbReference>
<dbReference type="UniPathway" id="UPA00232"/>
<dbReference type="GO" id="GO:0008425">
    <property type="term" value="F:2-methoxy-6-polyprenyl-1,4-benzoquinol methyltransferase activity"/>
    <property type="evidence" value="ECO:0007669"/>
    <property type="project" value="UniProtKB-UniRule"/>
</dbReference>
<dbReference type="GO" id="GO:0043770">
    <property type="term" value="F:demethylmenaquinone methyltransferase activity"/>
    <property type="evidence" value="ECO:0007669"/>
    <property type="project" value="UniProtKB-UniRule"/>
</dbReference>
<dbReference type="GO" id="GO:0009060">
    <property type="term" value="P:aerobic respiration"/>
    <property type="evidence" value="ECO:0007669"/>
    <property type="project" value="UniProtKB-UniRule"/>
</dbReference>
<dbReference type="GO" id="GO:0009234">
    <property type="term" value="P:menaquinone biosynthetic process"/>
    <property type="evidence" value="ECO:0007669"/>
    <property type="project" value="UniProtKB-UniRule"/>
</dbReference>
<dbReference type="GO" id="GO:0032259">
    <property type="term" value="P:methylation"/>
    <property type="evidence" value="ECO:0007669"/>
    <property type="project" value="UniProtKB-KW"/>
</dbReference>
<dbReference type="CDD" id="cd02440">
    <property type="entry name" value="AdoMet_MTases"/>
    <property type="match status" value="1"/>
</dbReference>
<dbReference type="Gene3D" id="3.40.50.150">
    <property type="entry name" value="Vaccinia Virus protein VP39"/>
    <property type="match status" value="1"/>
</dbReference>
<dbReference type="HAMAP" id="MF_01813">
    <property type="entry name" value="MenG_UbiE_methyltr"/>
    <property type="match status" value="1"/>
</dbReference>
<dbReference type="InterPro" id="IPR029063">
    <property type="entry name" value="SAM-dependent_MTases_sf"/>
</dbReference>
<dbReference type="InterPro" id="IPR004033">
    <property type="entry name" value="UbiE/COQ5_MeTrFase"/>
</dbReference>
<dbReference type="InterPro" id="IPR023576">
    <property type="entry name" value="UbiE/COQ5_MeTrFase_CS"/>
</dbReference>
<dbReference type="NCBIfam" id="TIGR01934">
    <property type="entry name" value="MenG_MenH_UbiE"/>
    <property type="match status" value="1"/>
</dbReference>
<dbReference type="NCBIfam" id="NF001240">
    <property type="entry name" value="PRK00216.1-1"/>
    <property type="match status" value="1"/>
</dbReference>
<dbReference type="NCBIfam" id="NF001244">
    <property type="entry name" value="PRK00216.1-5"/>
    <property type="match status" value="1"/>
</dbReference>
<dbReference type="PANTHER" id="PTHR43591:SF24">
    <property type="entry name" value="2-METHOXY-6-POLYPRENYL-1,4-BENZOQUINOL METHYLASE, MITOCHONDRIAL"/>
    <property type="match status" value="1"/>
</dbReference>
<dbReference type="PANTHER" id="PTHR43591">
    <property type="entry name" value="METHYLTRANSFERASE"/>
    <property type="match status" value="1"/>
</dbReference>
<dbReference type="Pfam" id="PF01209">
    <property type="entry name" value="Ubie_methyltran"/>
    <property type="match status" value="1"/>
</dbReference>
<dbReference type="SUPFAM" id="SSF53335">
    <property type="entry name" value="S-adenosyl-L-methionine-dependent methyltransferases"/>
    <property type="match status" value="1"/>
</dbReference>
<dbReference type="PROSITE" id="PS51608">
    <property type="entry name" value="SAM_MT_UBIE"/>
    <property type="match status" value="1"/>
</dbReference>
<dbReference type="PROSITE" id="PS01183">
    <property type="entry name" value="UBIE_1"/>
    <property type="match status" value="1"/>
</dbReference>
<name>UBIE_BURM7</name>
<sequence>MSKTHFGFETVEENEKAKKVAGVFHSVASNYDLMNDLMSAGLHRAWKAFTIAQANVRPGGKVLDIAAGTGDLTKAFAKAAGPTGEVWHTDINESMLRVGRDRLLDKGVVTPSLLCDAEKLPFPDNYFDVVTVAFGLRNMTHKDSALAEMRRVAKPGGRVMVLEFSKVWEPLKKAYDVYSFKVLPWLGDKFAKDADSYRYLAESIRMHPDQETLKTMMEQAGLDAVKYYNLSGGVVALHVGTKY</sequence>
<comment type="function">
    <text evidence="1">Methyltransferase required for the conversion of demethylmenaquinol (DMKH2) to menaquinol (MKH2) and the conversion of 2-polyprenyl-6-methoxy-1,4-benzoquinol (DDMQH2) to 2-polyprenyl-3-methyl-6-methoxy-1,4-benzoquinol (DMQH2).</text>
</comment>
<comment type="catalytic activity">
    <reaction evidence="1">
        <text>a 2-demethylmenaquinol + S-adenosyl-L-methionine = a menaquinol + S-adenosyl-L-homocysteine + H(+)</text>
        <dbReference type="Rhea" id="RHEA:42640"/>
        <dbReference type="Rhea" id="RHEA-COMP:9539"/>
        <dbReference type="Rhea" id="RHEA-COMP:9563"/>
        <dbReference type="ChEBI" id="CHEBI:15378"/>
        <dbReference type="ChEBI" id="CHEBI:18151"/>
        <dbReference type="ChEBI" id="CHEBI:55437"/>
        <dbReference type="ChEBI" id="CHEBI:57856"/>
        <dbReference type="ChEBI" id="CHEBI:59789"/>
        <dbReference type="EC" id="2.1.1.163"/>
    </reaction>
</comment>
<comment type="catalytic activity">
    <reaction evidence="1">
        <text>a 2-methoxy-6-(all-trans-polyprenyl)benzene-1,4-diol + S-adenosyl-L-methionine = a 5-methoxy-2-methyl-3-(all-trans-polyprenyl)benzene-1,4-diol + S-adenosyl-L-homocysteine + H(+)</text>
        <dbReference type="Rhea" id="RHEA:28286"/>
        <dbReference type="Rhea" id="RHEA-COMP:10858"/>
        <dbReference type="Rhea" id="RHEA-COMP:10859"/>
        <dbReference type="ChEBI" id="CHEBI:15378"/>
        <dbReference type="ChEBI" id="CHEBI:57856"/>
        <dbReference type="ChEBI" id="CHEBI:59789"/>
        <dbReference type="ChEBI" id="CHEBI:84166"/>
        <dbReference type="ChEBI" id="CHEBI:84167"/>
        <dbReference type="EC" id="2.1.1.201"/>
    </reaction>
</comment>
<comment type="pathway">
    <text evidence="1">Quinol/quinone metabolism; menaquinone biosynthesis; menaquinol from 1,4-dihydroxy-2-naphthoate: step 2/2.</text>
</comment>
<comment type="pathway">
    <text evidence="1">Cofactor biosynthesis; ubiquinone biosynthesis.</text>
</comment>
<comment type="similarity">
    <text evidence="1">Belongs to the class I-like SAM-binding methyltransferase superfamily. MenG/UbiE family.</text>
</comment>
<proteinExistence type="inferred from homology"/>
<feature type="chain" id="PRO_1000056228" description="Ubiquinone/menaquinone biosynthesis C-methyltransferase UbiE">
    <location>
        <begin position="1"/>
        <end position="243"/>
    </location>
</feature>
<feature type="binding site" evidence="1">
    <location>
        <position position="69"/>
    </location>
    <ligand>
        <name>S-adenosyl-L-methionine</name>
        <dbReference type="ChEBI" id="CHEBI:59789"/>
    </ligand>
</feature>
<feature type="binding site" evidence="1">
    <location>
        <position position="90"/>
    </location>
    <ligand>
        <name>S-adenosyl-L-methionine</name>
        <dbReference type="ChEBI" id="CHEBI:59789"/>
    </ligand>
</feature>
<feature type="binding site" evidence="1">
    <location>
        <begin position="116"/>
        <end position="117"/>
    </location>
    <ligand>
        <name>S-adenosyl-L-methionine</name>
        <dbReference type="ChEBI" id="CHEBI:59789"/>
    </ligand>
</feature>
<accession>A3MNT8</accession>
<organism>
    <name type="scientific">Burkholderia mallei (strain NCTC 10247)</name>
    <dbReference type="NCBI Taxonomy" id="320389"/>
    <lineage>
        <taxon>Bacteria</taxon>
        <taxon>Pseudomonadati</taxon>
        <taxon>Pseudomonadota</taxon>
        <taxon>Betaproteobacteria</taxon>
        <taxon>Burkholderiales</taxon>
        <taxon>Burkholderiaceae</taxon>
        <taxon>Burkholderia</taxon>
        <taxon>pseudomallei group</taxon>
    </lineage>
</organism>